<dbReference type="EC" id="2.1.1.189" evidence="1"/>
<dbReference type="EMBL" id="CU928163">
    <property type="protein sequence ID" value="CAR12258.1"/>
    <property type="molecule type" value="Genomic_DNA"/>
</dbReference>
<dbReference type="RefSeq" id="WP_001149722.1">
    <property type="nucleotide sequence ID" value="NC_011751.1"/>
</dbReference>
<dbReference type="RefSeq" id="YP_002411802.1">
    <property type="nucleotide sequence ID" value="NC_011751.1"/>
</dbReference>
<dbReference type="SMR" id="B7NAK5"/>
<dbReference type="STRING" id="585056.ECUMN_1049"/>
<dbReference type="KEGG" id="eum:ECUMN_1049"/>
<dbReference type="PATRIC" id="fig|585056.7.peg.1242"/>
<dbReference type="HOGENOM" id="CLU_014689_0_0_6"/>
<dbReference type="Proteomes" id="UP000007097">
    <property type="component" value="Chromosome"/>
</dbReference>
<dbReference type="GO" id="GO:0051539">
    <property type="term" value="F:4 iron, 4 sulfur cluster binding"/>
    <property type="evidence" value="ECO:0007669"/>
    <property type="project" value="UniProtKB-KW"/>
</dbReference>
<dbReference type="GO" id="GO:0005506">
    <property type="term" value="F:iron ion binding"/>
    <property type="evidence" value="ECO:0007669"/>
    <property type="project" value="UniProtKB-UniRule"/>
</dbReference>
<dbReference type="GO" id="GO:0070041">
    <property type="term" value="F:rRNA (uridine-C5-)-methyltransferase activity"/>
    <property type="evidence" value="ECO:0007669"/>
    <property type="project" value="UniProtKB-UniRule"/>
</dbReference>
<dbReference type="GO" id="GO:0070475">
    <property type="term" value="P:rRNA base methylation"/>
    <property type="evidence" value="ECO:0007669"/>
    <property type="project" value="TreeGrafter"/>
</dbReference>
<dbReference type="CDD" id="cd02440">
    <property type="entry name" value="AdoMet_MTases"/>
    <property type="match status" value="1"/>
</dbReference>
<dbReference type="FunFam" id="2.40.50.1070:FF:000002">
    <property type="entry name" value="23S rRNA (uracil(747)-C(5))-methyltransferase RlmC"/>
    <property type="match status" value="1"/>
</dbReference>
<dbReference type="FunFam" id="3.40.50.150:FF:000049">
    <property type="entry name" value="23S rRNA (uracil(747)-C(5))-methyltransferase RlmC"/>
    <property type="match status" value="1"/>
</dbReference>
<dbReference type="Gene3D" id="2.40.50.1070">
    <property type="match status" value="1"/>
</dbReference>
<dbReference type="Gene3D" id="3.40.50.150">
    <property type="entry name" value="Vaccinia Virus protein VP39"/>
    <property type="match status" value="1"/>
</dbReference>
<dbReference type="HAMAP" id="MF_01012">
    <property type="entry name" value="23SrRNA_methyltr_RlmC"/>
    <property type="match status" value="1"/>
</dbReference>
<dbReference type="InterPro" id="IPR011825">
    <property type="entry name" value="23SrRNA_MeTrfase_RlmC"/>
</dbReference>
<dbReference type="InterPro" id="IPR030390">
    <property type="entry name" value="MeTrfase_TrmA_AS"/>
</dbReference>
<dbReference type="InterPro" id="IPR030391">
    <property type="entry name" value="MeTrfase_TrmA_CS"/>
</dbReference>
<dbReference type="InterPro" id="IPR029063">
    <property type="entry name" value="SAM-dependent_MTases_sf"/>
</dbReference>
<dbReference type="InterPro" id="IPR010280">
    <property type="entry name" value="U5_MeTrfase_fam"/>
</dbReference>
<dbReference type="NCBIfam" id="TIGR02085">
    <property type="entry name" value="meth_trns_rumB"/>
    <property type="match status" value="1"/>
</dbReference>
<dbReference type="PANTHER" id="PTHR11061">
    <property type="entry name" value="RNA M5U METHYLTRANSFERASE"/>
    <property type="match status" value="1"/>
</dbReference>
<dbReference type="PANTHER" id="PTHR11061:SF30">
    <property type="entry name" value="TRNA (URACIL(54)-C(5))-METHYLTRANSFERASE"/>
    <property type="match status" value="1"/>
</dbReference>
<dbReference type="Pfam" id="PF05958">
    <property type="entry name" value="tRNA_U5-meth_tr"/>
    <property type="match status" value="1"/>
</dbReference>
<dbReference type="SUPFAM" id="SSF53335">
    <property type="entry name" value="S-adenosyl-L-methionine-dependent methyltransferases"/>
    <property type="match status" value="1"/>
</dbReference>
<dbReference type="PROSITE" id="PS51687">
    <property type="entry name" value="SAM_MT_RNA_M5U"/>
    <property type="match status" value="1"/>
</dbReference>
<dbReference type="PROSITE" id="PS01230">
    <property type="entry name" value="TRMA_1"/>
    <property type="match status" value="1"/>
</dbReference>
<dbReference type="PROSITE" id="PS01231">
    <property type="entry name" value="TRMA_2"/>
    <property type="match status" value="1"/>
</dbReference>
<gene>
    <name evidence="1" type="primary">rlmC</name>
    <name type="synonym">rumB</name>
    <name type="ordered locus">ECUMN_1049</name>
</gene>
<reference key="1">
    <citation type="journal article" date="2009" name="PLoS Genet.">
        <title>Organised genome dynamics in the Escherichia coli species results in highly diverse adaptive paths.</title>
        <authorList>
            <person name="Touchon M."/>
            <person name="Hoede C."/>
            <person name="Tenaillon O."/>
            <person name="Barbe V."/>
            <person name="Baeriswyl S."/>
            <person name="Bidet P."/>
            <person name="Bingen E."/>
            <person name="Bonacorsi S."/>
            <person name="Bouchier C."/>
            <person name="Bouvet O."/>
            <person name="Calteau A."/>
            <person name="Chiapello H."/>
            <person name="Clermont O."/>
            <person name="Cruveiller S."/>
            <person name="Danchin A."/>
            <person name="Diard M."/>
            <person name="Dossat C."/>
            <person name="Karoui M.E."/>
            <person name="Frapy E."/>
            <person name="Garry L."/>
            <person name="Ghigo J.M."/>
            <person name="Gilles A.M."/>
            <person name="Johnson J."/>
            <person name="Le Bouguenec C."/>
            <person name="Lescat M."/>
            <person name="Mangenot S."/>
            <person name="Martinez-Jehanne V."/>
            <person name="Matic I."/>
            <person name="Nassif X."/>
            <person name="Oztas S."/>
            <person name="Petit M.A."/>
            <person name="Pichon C."/>
            <person name="Rouy Z."/>
            <person name="Ruf C.S."/>
            <person name="Schneider D."/>
            <person name="Tourret J."/>
            <person name="Vacherie B."/>
            <person name="Vallenet D."/>
            <person name="Medigue C."/>
            <person name="Rocha E.P.C."/>
            <person name="Denamur E."/>
        </authorList>
    </citation>
    <scope>NUCLEOTIDE SEQUENCE [LARGE SCALE GENOMIC DNA]</scope>
    <source>
        <strain>UMN026 / ExPEC</strain>
    </source>
</reference>
<accession>B7NAK5</accession>
<keyword id="KW-0004">4Fe-4S</keyword>
<keyword id="KW-0408">Iron</keyword>
<keyword id="KW-0411">Iron-sulfur</keyword>
<keyword id="KW-0479">Metal-binding</keyword>
<keyword id="KW-0489">Methyltransferase</keyword>
<keyword id="KW-0698">rRNA processing</keyword>
<keyword id="KW-0949">S-adenosyl-L-methionine</keyword>
<keyword id="KW-0808">Transferase</keyword>
<name>RLMC_ECOLU</name>
<sequence length="375" mass="41946">MQCALYDAGRCRSCQWITQPIPEQLSAKTADLKNLLADFPVEEWCAPVSGPEQGFRNKAKMVVSGSVEKPLLGMLHRDGTPEDLCDCPLYPASFAPVFAALKPFIARAGLTPYNVARKRGELKYILLTESQSDGGMMLRFVLRSETKLAQLRKALPWLQEQLPQLKVITVNIQPVHMAIMEGETEIYLTEQQALADRFNDVPLWIRPQSFFQTNPAVASQLYATARDWVRQLPVNHMWDLFCGVGGFGLHCATPDMQLTGIEIAPEAIACAKQSAAELGLTRLQFQALDSTQFATAQGEVPELVLVNPPRRGIGKPLCDYLSTMAPRFIIYSSCNAQTMAKDIRELPGYRIERVQLFDMFPHTAHYEVLTLLVKM</sequence>
<proteinExistence type="inferred from homology"/>
<comment type="function">
    <text evidence="1">Catalyzes the formation of 5-methyl-uridine at position 747 (m5U747) in 23S rRNA.</text>
</comment>
<comment type="catalytic activity">
    <reaction evidence="1">
        <text>uridine(747) in 23S rRNA + S-adenosyl-L-methionine = 5-methyluridine(747) in 23S rRNA + S-adenosyl-L-homocysteine + H(+)</text>
        <dbReference type="Rhea" id="RHEA:42628"/>
        <dbReference type="Rhea" id="RHEA-COMP:10154"/>
        <dbReference type="Rhea" id="RHEA-COMP:10155"/>
        <dbReference type="ChEBI" id="CHEBI:15378"/>
        <dbReference type="ChEBI" id="CHEBI:57856"/>
        <dbReference type="ChEBI" id="CHEBI:59789"/>
        <dbReference type="ChEBI" id="CHEBI:65315"/>
        <dbReference type="ChEBI" id="CHEBI:74447"/>
        <dbReference type="EC" id="2.1.1.189"/>
    </reaction>
</comment>
<comment type="similarity">
    <text evidence="1">Belongs to the class I-like SAM-binding methyltransferase superfamily. RNA M5U methyltransferase family. RlmC subfamily.</text>
</comment>
<organism>
    <name type="scientific">Escherichia coli O17:K52:H18 (strain UMN026 / ExPEC)</name>
    <dbReference type="NCBI Taxonomy" id="585056"/>
    <lineage>
        <taxon>Bacteria</taxon>
        <taxon>Pseudomonadati</taxon>
        <taxon>Pseudomonadota</taxon>
        <taxon>Gammaproteobacteria</taxon>
        <taxon>Enterobacterales</taxon>
        <taxon>Enterobacteriaceae</taxon>
        <taxon>Escherichia</taxon>
    </lineage>
</organism>
<evidence type="ECO:0000255" key="1">
    <source>
        <dbReference type="HAMAP-Rule" id="MF_01012"/>
    </source>
</evidence>
<protein>
    <recommendedName>
        <fullName evidence="1">23S rRNA (uracil(747)-C(5))-methyltransferase RlmC</fullName>
        <ecNumber evidence="1">2.1.1.189</ecNumber>
    </recommendedName>
    <alternativeName>
        <fullName evidence="1">23S rRNA(m5U747)-methyltransferase</fullName>
    </alternativeName>
</protein>
<feature type="chain" id="PRO_1000200867" description="23S rRNA (uracil(747)-C(5))-methyltransferase RlmC">
    <location>
        <begin position="1"/>
        <end position="375"/>
    </location>
</feature>
<feature type="active site" description="Nucleophile" evidence="1">
    <location>
        <position position="334"/>
    </location>
</feature>
<feature type="binding site" evidence="1">
    <location>
        <position position="3"/>
    </location>
    <ligand>
        <name>[4Fe-4S] cluster</name>
        <dbReference type="ChEBI" id="CHEBI:49883"/>
    </ligand>
</feature>
<feature type="binding site" evidence="1">
    <location>
        <position position="11"/>
    </location>
    <ligand>
        <name>[4Fe-4S] cluster</name>
        <dbReference type="ChEBI" id="CHEBI:49883"/>
    </ligand>
</feature>
<feature type="binding site" evidence="1">
    <location>
        <position position="14"/>
    </location>
    <ligand>
        <name>[4Fe-4S] cluster</name>
        <dbReference type="ChEBI" id="CHEBI:49883"/>
    </ligand>
</feature>
<feature type="binding site" evidence="1">
    <location>
        <position position="87"/>
    </location>
    <ligand>
        <name>[4Fe-4S] cluster</name>
        <dbReference type="ChEBI" id="CHEBI:49883"/>
    </ligand>
</feature>
<feature type="binding site" evidence="1">
    <location>
        <position position="212"/>
    </location>
    <ligand>
        <name>S-adenosyl-L-methionine</name>
        <dbReference type="ChEBI" id="CHEBI:59789"/>
    </ligand>
</feature>
<feature type="binding site" evidence="1">
    <location>
        <position position="241"/>
    </location>
    <ligand>
        <name>S-adenosyl-L-methionine</name>
        <dbReference type="ChEBI" id="CHEBI:59789"/>
    </ligand>
</feature>
<feature type="binding site" evidence="1">
    <location>
        <position position="262"/>
    </location>
    <ligand>
        <name>S-adenosyl-L-methionine</name>
        <dbReference type="ChEBI" id="CHEBI:59789"/>
    </ligand>
</feature>
<feature type="binding site" evidence="1">
    <location>
        <position position="307"/>
    </location>
    <ligand>
        <name>S-adenosyl-L-methionine</name>
        <dbReference type="ChEBI" id="CHEBI:59789"/>
    </ligand>
</feature>